<dbReference type="EMBL" id="D28533">
    <property type="protein sequence ID" value="BAA05890.1"/>
    <property type="molecule type" value="Genomic_DNA"/>
</dbReference>
<dbReference type="SMR" id="P54796"/>
<dbReference type="STRING" id="548.EAG7_02826"/>
<dbReference type="Gene3D" id="2.40.128.20">
    <property type="match status" value="1"/>
</dbReference>
<dbReference type="InterPro" id="IPR012674">
    <property type="entry name" value="Calycin"/>
</dbReference>
<dbReference type="InterPro" id="IPR035348">
    <property type="entry name" value="MoaF_C"/>
</dbReference>
<dbReference type="InterPro" id="IPR024724">
    <property type="entry name" value="MoaF_N"/>
</dbReference>
<dbReference type="Pfam" id="PF10703">
    <property type="entry name" value="MoaF"/>
    <property type="match status" value="1"/>
</dbReference>
<dbReference type="Pfam" id="PF17409">
    <property type="entry name" value="MoaF_C"/>
    <property type="match status" value="1"/>
</dbReference>
<reference key="1">
    <citation type="journal article" date="1995" name="Gene">
        <title>A Klebsiella aerogenes moaEF operon is controlled by the positive MoaR regulator of the monoamine regulon.</title>
        <authorList>
            <person name="Azakami H."/>
            <person name="Sugino H."/>
            <person name="Iwata N."/>
            <person name="Yokoro N."/>
            <person name="Yamashita M."/>
            <person name="Murooka Y."/>
        </authorList>
    </citation>
    <scope>NUCLEOTIDE SEQUENCE [GENOMIC DNA]</scope>
    <scope>PROTEIN SEQUENCE OF 14-31</scope>
    <source>
        <strain>W70</strain>
    </source>
</reference>
<keyword id="KW-0903">Direct protein sequencing</keyword>
<sequence length="262" mass="29157">MTSEAVFIQVGALADGFAPHGNLLATASLPAGENFTFYVAGSEPQQLVIEDEQTLSWNGKRAPWRATALRPDILFIDFLDPERDNASISAVCNLTQRNATLVYGQLPDEAPRAGRLQPGRTRVALTAVEVRFVFARLDAQPGPLPGFTDALIGMRNQYTYSPTERYEHIYLNDNFYAWQCLDGVEKGLADVDRCHYVQVAEDLYLFVWREKIIPTLGVILIDLQQMRTDGKIMGYQGSDFGALSNFPVGATAKILNVTRHQE</sequence>
<proteinExistence type="evidence at protein level"/>
<accession>P54796</accession>
<feature type="propeptide" id="PRO_0000021727" evidence="1">
    <location>
        <begin position="1"/>
        <end position="13"/>
    </location>
</feature>
<feature type="chain" id="PRO_0000021728" description="Protein MoaF">
    <location>
        <begin position="14"/>
        <end position="262"/>
    </location>
</feature>
<protein>
    <recommendedName>
        <fullName>Protein MoaF</fullName>
    </recommendedName>
</protein>
<organism>
    <name type="scientific">Klebsiella aerogenes</name>
    <name type="common">Enterobacter aerogenes</name>
    <dbReference type="NCBI Taxonomy" id="548"/>
    <lineage>
        <taxon>Bacteria</taxon>
        <taxon>Pseudomonadati</taxon>
        <taxon>Pseudomonadota</taxon>
        <taxon>Gammaproteobacteria</taxon>
        <taxon>Enterobacterales</taxon>
        <taxon>Enterobacteriaceae</taxon>
        <taxon>Klebsiella/Raoultella group</taxon>
        <taxon>Klebsiella</taxon>
    </lineage>
</organism>
<gene>
    <name type="primary">moaF</name>
</gene>
<evidence type="ECO:0000269" key="1">
    <source>
    </source>
</evidence>
<name>MOAF_KLEAE</name>